<dbReference type="EC" id="3.2.1.55"/>
<dbReference type="EMBL" id="AM270337">
    <property type="protein sequence ID" value="CAK42333.1"/>
    <property type="molecule type" value="Genomic_DNA"/>
</dbReference>
<dbReference type="RefSeq" id="XP_001396769.1">
    <property type="nucleotide sequence ID" value="XM_001396732.2"/>
</dbReference>
<dbReference type="SMR" id="A2R511"/>
<dbReference type="CAZy" id="CBM42">
    <property type="family name" value="Carbohydrate-Binding Module Family 42"/>
</dbReference>
<dbReference type="CAZy" id="GH54">
    <property type="family name" value="Glycoside Hydrolase Family 54"/>
</dbReference>
<dbReference type="GlyCosmos" id="A2R511">
    <property type="glycosylation" value="2 sites, No reported glycans"/>
</dbReference>
<dbReference type="EnsemblFungi" id="CAK42333">
    <property type="protein sequence ID" value="CAK42333"/>
    <property type="gene ID" value="An15g02300"/>
</dbReference>
<dbReference type="GeneID" id="4987831"/>
<dbReference type="KEGG" id="ang:An15g02300"/>
<dbReference type="VEuPathDB" id="FungiDB:An15g02300"/>
<dbReference type="HOGENOM" id="CLU_029332_3_0_1"/>
<dbReference type="UniPathway" id="UPA00667"/>
<dbReference type="Proteomes" id="UP000006706">
    <property type="component" value="Chromosome 3R"/>
</dbReference>
<dbReference type="GO" id="GO:0005576">
    <property type="term" value="C:extracellular region"/>
    <property type="evidence" value="ECO:0000250"/>
    <property type="project" value="UniProtKB"/>
</dbReference>
<dbReference type="GO" id="GO:0046556">
    <property type="term" value="F:alpha-L-arabinofuranosidase activity"/>
    <property type="evidence" value="ECO:0000314"/>
    <property type="project" value="AspGD"/>
</dbReference>
<dbReference type="GO" id="GO:0031222">
    <property type="term" value="P:arabinan catabolic process"/>
    <property type="evidence" value="ECO:0007669"/>
    <property type="project" value="UniProtKB-UniPathway"/>
</dbReference>
<dbReference type="GO" id="GO:0031221">
    <property type="term" value="P:arabinan metabolic process"/>
    <property type="evidence" value="ECO:0000305"/>
    <property type="project" value="AspGD"/>
</dbReference>
<dbReference type="GO" id="GO:0019566">
    <property type="term" value="P:arabinose metabolic process"/>
    <property type="evidence" value="ECO:0000250"/>
    <property type="project" value="UniProtKB"/>
</dbReference>
<dbReference type="GO" id="GO:0046373">
    <property type="term" value="P:L-arabinose metabolic process"/>
    <property type="evidence" value="ECO:0007669"/>
    <property type="project" value="InterPro"/>
</dbReference>
<dbReference type="GO" id="GO:0045490">
    <property type="term" value="P:pectin catabolic process"/>
    <property type="evidence" value="ECO:0007669"/>
    <property type="project" value="TreeGrafter"/>
</dbReference>
<dbReference type="GO" id="GO:0045493">
    <property type="term" value="P:xylan catabolic process"/>
    <property type="evidence" value="ECO:0007669"/>
    <property type="project" value="UniProtKB-KW"/>
</dbReference>
<dbReference type="CDD" id="cd23399">
    <property type="entry name" value="beta-trefoil_ABD_ABFB"/>
    <property type="match status" value="1"/>
</dbReference>
<dbReference type="FunFam" id="2.60.120.200:FF:000131">
    <property type="entry name" value="Probable alpha-L-arabinofuranosidase B"/>
    <property type="match status" value="1"/>
</dbReference>
<dbReference type="FunFam" id="2.80.10.50:FF:000059">
    <property type="entry name" value="Probable alpha-L-arabinofuranosidase B"/>
    <property type="match status" value="1"/>
</dbReference>
<dbReference type="Gene3D" id="2.60.120.200">
    <property type="match status" value="1"/>
</dbReference>
<dbReference type="Gene3D" id="2.80.10.50">
    <property type="match status" value="1"/>
</dbReference>
<dbReference type="InterPro" id="IPR015289">
    <property type="entry name" value="A-L-arabinofuranosidase_B_cat"/>
</dbReference>
<dbReference type="InterPro" id="IPR038964">
    <property type="entry name" value="ABFB"/>
</dbReference>
<dbReference type="InterPro" id="IPR007934">
    <property type="entry name" value="AbfB_ABD"/>
</dbReference>
<dbReference type="InterPro" id="IPR036195">
    <property type="entry name" value="AbfB_ABD_sf"/>
</dbReference>
<dbReference type="InterPro" id="IPR013320">
    <property type="entry name" value="ConA-like_dom_sf"/>
</dbReference>
<dbReference type="PANTHER" id="PTHR39447">
    <property type="entry name" value="ALPHA-L-ARABINOFURANOSIDASE B"/>
    <property type="match status" value="1"/>
</dbReference>
<dbReference type="PANTHER" id="PTHR39447:SF2">
    <property type="entry name" value="ALPHA-L-ARABINOFURANOSIDASE B"/>
    <property type="match status" value="1"/>
</dbReference>
<dbReference type="Pfam" id="PF05270">
    <property type="entry name" value="AbfB"/>
    <property type="match status" value="1"/>
</dbReference>
<dbReference type="Pfam" id="PF09206">
    <property type="entry name" value="ArabFuran-catal"/>
    <property type="match status" value="1"/>
</dbReference>
<dbReference type="SUPFAM" id="SSF110221">
    <property type="entry name" value="AbfB domain"/>
    <property type="match status" value="1"/>
</dbReference>
<dbReference type="SUPFAM" id="SSF49899">
    <property type="entry name" value="Concanavalin A-like lectins/glucanases"/>
    <property type="match status" value="1"/>
</dbReference>
<accession>A2R511</accession>
<protein>
    <recommendedName>
        <fullName>Probable alpha-L-arabinofuranosidase B</fullName>
        <shortName>ABF B</shortName>
        <shortName>Arabinosidase B</shortName>
        <ecNumber>3.2.1.55</ecNumber>
    </recommendedName>
</protein>
<feature type="signal peptide" evidence="3">
    <location>
        <begin position="1"/>
        <end position="18"/>
    </location>
</feature>
<feature type="chain" id="PRO_5000221024" description="Probable alpha-L-arabinofuranosidase B">
    <location>
        <begin position="19"/>
        <end position="499"/>
    </location>
</feature>
<feature type="region of interest" description="Catalytic" evidence="1">
    <location>
        <begin position="19"/>
        <end position="335"/>
    </location>
</feature>
<feature type="region of interest" description="ABD" evidence="1">
    <location>
        <begin position="336"/>
        <end position="499"/>
    </location>
</feature>
<feature type="active site" description="Nucleophile" evidence="1">
    <location>
        <position position="221"/>
    </location>
</feature>
<feature type="active site" description="Proton donor" evidence="1">
    <location>
        <position position="297"/>
    </location>
</feature>
<feature type="binding site" evidence="2">
    <location>
        <position position="219"/>
    </location>
    <ligand>
        <name>substrate</name>
    </ligand>
</feature>
<feature type="binding site" evidence="2">
    <location>
        <position position="222"/>
    </location>
    <ligand>
        <name>substrate</name>
    </ligand>
</feature>
<feature type="binding site" evidence="2">
    <location>
        <position position="223"/>
    </location>
    <ligand>
        <name>substrate</name>
    </ligand>
</feature>
<feature type="binding site" evidence="2">
    <location>
        <position position="296"/>
    </location>
    <ligand>
        <name>substrate</name>
    </ligand>
</feature>
<feature type="binding site" evidence="2">
    <location>
        <position position="416"/>
    </location>
    <ligand>
        <name>substrate</name>
    </ligand>
</feature>
<feature type="binding site" evidence="2">
    <location>
        <position position="418"/>
    </location>
    <ligand>
        <name>substrate</name>
    </ligand>
</feature>
<feature type="binding site" evidence="2">
    <location>
        <position position="419"/>
    </location>
    <ligand>
        <name>substrate</name>
    </ligand>
</feature>
<feature type="binding site" evidence="2">
    <location>
        <position position="435"/>
    </location>
    <ligand>
        <name>substrate</name>
    </ligand>
</feature>
<feature type="binding site" evidence="2">
    <location>
        <position position="463"/>
    </location>
    <ligand>
        <name>substrate</name>
    </ligand>
</feature>
<feature type="binding site" evidence="2">
    <location>
        <position position="465"/>
    </location>
    <ligand>
        <name>substrate</name>
    </ligand>
</feature>
<feature type="binding site" evidence="2">
    <location>
        <position position="468"/>
    </location>
    <ligand>
        <name>substrate</name>
    </ligand>
</feature>
<feature type="binding site" evidence="2">
    <location>
        <position position="488"/>
    </location>
    <ligand>
        <name>substrate</name>
    </ligand>
</feature>
<feature type="site" description="Cis-peptide bond" evidence="2">
    <location>
        <begin position="176"/>
        <end position="177"/>
    </location>
</feature>
<feature type="glycosylation site" description="N-linked (GlcNAc...) asparagine" evidence="3">
    <location>
        <position position="83"/>
    </location>
</feature>
<feature type="glycosylation site" description="N-linked (GlcNAc...) asparagine" evidence="3">
    <location>
        <position position="202"/>
    </location>
</feature>
<feature type="disulfide bond" evidence="2">
    <location>
        <begin position="21"/>
        <end position="31"/>
    </location>
</feature>
<feature type="disulfide bond" evidence="2">
    <location>
        <begin position="81"/>
        <end position="86"/>
    </location>
</feature>
<feature type="disulfide bond" evidence="2">
    <location>
        <begin position="176"/>
        <end position="177"/>
    </location>
</feature>
<feature type="disulfide bond" evidence="2">
    <location>
        <begin position="401"/>
        <end position="439"/>
    </location>
</feature>
<organism>
    <name type="scientific">Aspergillus niger (strain ATCC MYA-4892 / CBS 513.88 / FGSC A1513)</name>
    <dbReference type="NCBI Taxonomy" id="425011"/>
    <lineage>
        <taxon>Eukaryota</taxon>
        <taxon>Fungi</taxon>
        <taxon>Dikarya</taxon>
        <taxon>Ascomycota</taxon>
        <taxon>Pezizomycotina</taxon>
        <taxon>Eurotiomycetes</taxon>
        <taxon>Eurotiomycetidae</taxon>
        <taxon>Eurotiales</taxon>
        <taxon>Aspergillaceae</taxon>
        <taxon>Aspergillus</taxon>
        <taxon>Aspergillus subgen. Circumdati</taxon>
    </lineage>
</organism>
<gene>
    <name type="primary">abfB</name>
    <name type="ORF">An15g02300</name>
</gene>
<keyword id="KW-0119">Carbohydrate metabolism</keyword>
<keyword id="KW-1015">Disulfide bond</keyword>
<keyword id="KW-0325">Glycoprotein</keyword>
<keyword id="KW-0326">Glycosidase</keyword>
<keyword id="KW-0378">Hydrolase</keyword>
<keyword id="KW-0624">Polysaccharide degradation</keyword>
<keyword id="KW-1185">Reference proteome</keyword>
<keyword id="KW-0964">Secreted</keyword>
<keyword id="KW-0732">Signal</keyword>
<keyword id="KW-0858">Xylan degradation</keyword>
<proteinExistence type="inferred from homology"/>
<reference key="1">
    <citation type="journal article" date="2007" name="Nat. Biotechnol.">
        <title>Genome sequencing and analysis of the versatile cell factory Aspergillus niger CBS 513.88.</title>
        <authorList>
            <person name="Pel H.J."/>
            <person name="de Winde J.H."/>
            <person name="Archer D.B."/>
            <person name="Dyer P.S."/>
            <person name="Hofmann G."/>
            <person name="Schaap P.J."/>
            <person name="Turner G."/>
            <person name="de Vries R.P."/>
            <person name="Albang R."/>
            <person name="Albermann K."/>
            <person name="Andersen M.R."/>
            <person name="Bendtsen J.D."/>
            <person name="Benen J.A.E."/>
            <person name="van den Berg M."/>
            <person name="Breestraat S."/>
            <person name="Caddick M.X."/>
            <person name="Contreras R."/>
            <person name="Cornell M."/>
            <person name="Coutinho P.M."/>
            <person name="Danchin E.G.J."/>
            <person name="Debets A.J.M."/>
            <person name="Dekker P."/>
            <person name="van Dijck P.W.M."/>
            <person name="van Dijk A."/>
            <person name="Dijkhuizen L."/>
            <person name="Driessen A.J.M."/>
            <person name="d'Enfert C."/>
            <person name="Geysens S."/>
            <person name="Goosen C."/>
            <person name="Groot G.S.P."/>
            <person name="de Groot P.W.J."/>
            <person name="Guillemette T."/>
            <person name="Henrissat B."/>
            <person name="Herweijer M."/>
            <person name="van den Hombergh J.P.T.W."/>
            <person name="van den Hondel C.A.M.J.J."/>
            <person name="van der Heijden R.T.J.M."/>
            <person name="van der Kaaij R.M."/>
            <person name="Klis F.M."/>
            <person name="Kools H.J."/>
            <person name="Kubicek C.P."/>
            <person name="van Kuyk P.A."/>
            <person name="Lauber J."/>
            <person name="Lu X."/>
            <person name="van der Maarel M.J.E.C."/>
            <person name="Meulenberg R."/>
            <person name="Menke H."/>
            <person name="Mortimer M.A."/>
            <person name="Nielsen J."/>
            <person name="Oliver S.G."/>
            <person name="Olsthoorn M."/>
            <person name="Pal K."/>
            <person name="van Peij N.N.M.E."/>
            <person name="Ram A.F.J."/>
            <person name="Rinas U."/>
            <person name="Roubos J.A."/>
            <person name="Sagt C.M.J."/>
            <person name="Schmoll M."/>
            <person name="Sun J."/>
            <person name="Ussery D."/>
            <person name="Varga J."/>
            <person name="Vervecken W."/>
            <person name="van de Vondervoort P.J.J."/>
            <person name="Wedler H."/>
            <person name="Woesten H.A.B."/>
            <person name="Zeng A.-P."/>
            <person name="van Ooyen A.J.J."/>
            <person name="Visser J."/>
            <person name="Stam H."/>
        </authorList>
    </citation>
    <scope>NUCLEOTIDE SEQUENCE [LARGE SCALE GENOMIC DNA]</scope>
    <source>
        <strain>ATCC MYA-4892 / CBS 513.88 / FGSC A1513</strain>
    </source>
</reference>
<sequence length="499" mass="52509">MFSRRNLVALGLAATVSAGPCDIYEAGDTPCVAAHSTTRALYSSFSGALYQLQRGSDDTTTTISPLTAGGVADASAQDTFCANTTCLITIIYDQSGNGNHLTQAPPGGFDGPDVDGYDNLASAIGAPVTLNGQKAYGVFMSPGTGYRNNEATGTATGDEPEGMYAVLDGTHYNDACCFDYGNAETSSTDTGAGHMEAIYLGNSTTWGYGAGDGPWIMVDMENNLFSGADEGYNSGDPSISYSFVTAAVKGGADKWAIRGGNAASGSLSTYYSGARPDYSGYNPMSKEGAIILGIGGDNSNGAQGTFYEGVMTSGYPSDDVENSVQENIVAAKYVSGSLVSGPSFTSGEVVSLRVTTPGYTTRYIAHTDTTVNTQVVDDDSSTTLKEEASWTVVTGLANSQCFSFESVDTPGSYIRHYNFELLLNANDGTKQFHEDATFCPQAPLNGEGTSLRSWSYPTRYFRHYDNVLYAASNGGVQTFDSKTSFNNDVSFEIETAFAS</sequence>
<name>ABFB_ASPNC</name>
<evidence type="ECO:0000250" key="1"/>
<evidence type="ECO:0000250" key="2">
    <source>
        <dbReference type="UniProtKB" id="Q8NK89"/>
    </source>
</evidence>
<evidence type="ECO:0000255" key="3"/>
<evidence type="ECO:0000305" key="4"/>
<comment type="function">
    <text evidence="1">Alpha-L-arabinofuranosidase involved in the degradation of arabinoxylan, a major component of plant hemicellulose. Able to hydrolyze 1,5-, 1,3- and 1,2-alpha-linkages not only in L-arabinofuranosyl oligosaccharides, but also in polysaccharides containing terminal non-reducing L-arabinofuranoses in side chains, like L-arabinan, arabinogalactan and arabinoxylan (By similarity).</text>
</comment>
<comment type="catalytic activity">
    <reaction>
        <text>Hydrolysis of terminal non-reducing alpha-L-arabinofuranoside residues in alpha-L-arabinosides.</text>
        <dbReference type="EC" id="3.2.1.55"/>
    </reaction>
</comment>
<comment type="pathway">
    <text>Glycan metabolism; L-arabinan degradation.</text>
</comment>
<comment type="subcellular location">
    <subcellularLocation>
        <location evidence="1">Secreted</location>
    </subcellularLocation>
</comment>
<comment type="domain">
    <text evidence="1">Organized into two domains: an N-terminal catalytic domain and a C-terminal arabinose-binding domain (ABD).</text>
</comment>
<comment type="similarity">
    <text evidence="4">Belongs to the glycosyl hydrolase 54 family.</text>
</comment>